<evidence type="ECO:0000255" key="1">
    <source>
        <dbReference type="HAMAP-Rule" id="MF_01217"/>
    </source>
</evidence>
<evidence type="ECO:0000255" key="2">
    <source>
        <dbReference type="PROSITE-ProRule" id="PRU00258"/>
    </source>
</evidence>
<dbReference type="EMBL" id="AE016826">
    <property type="protein sequence ID" value="AAO27044.1"/>
    <property type="molecule type" value="Genomic_DNA"/>
</dbReference>
<dbReference type="RefSeq" id="WP_011091445.1">
    <property type="nucleotide sequence ID" value="NC_004545.1"/>
</dbReference>
<dbReference type="SMR" id="P59449"/>
<dbReference type="STRING" id="224915.bbp_322"/>
<dbReference type="KEGG" id="bab:bbp_322"/>
<dbReference type="eggNOG" id="COG0236">
    <property type="taxonomic scope" value="Bacteria"/>
</dbReference>
<dbReference type="HOGENOM" id="CLU_108696_5_1_6"/>
<dbReference type="OrthoDB" id="9804551at2"/>
<dbReference type="UniPathway" id="UPA00094"/>
<dbReference type="Proteomes" id="UP000000601">
    <property type="component" value="Chromosome"/>
</dbReference>
<dbReference type="GO" id="GO:0005829">
    <property type="term" value="C:cytosol"/>
    <property type="evidence" value="ECO:0007669"/>
    <property type="project" value="TreeGrafter"/>
</dbReference>
<dbReference type="GO" id="GO:0016020">
    <property type="term" value="C:membrane"/>
    <property type="evidence" value="ECO:0007669"/>
    <property type="project" value="GOC"/>
</dbReference>
<dbReference type="GO" id="GO:0000035">
    <property type="term" value="F:acyl binding"/>
    <property type="evidence" value="ECO:0007669"/>
    <property type="project" value="TreeGrafter"/>
</dbReference>
<dbReference type="GO" id="GO:0000036">
    <property type="term" value="F:acyl carrier activity"/>
    <property type="evidence" value="ECO:0007669"/>
    <property type="project" value="UniProtKB-UniRule"/>
</dbReference>
<dbReference type="GO" id="GO:0009245">
    <property type="term" value="P:lipid A biosynthetic process"/>
    <property type="evidence" value="ECO:0007669"/>
    <property type="project" value="TreeGrafter"/>
</dbReference>
<dbReference type="Gene3D" id="1.10.1200.10">
    <property type="entry name" value="ACP-like"/>
    <property type="match status" value="1"/>
</dbReference>
<dbReference type="HAMAP" id="MF_01217">
    <property type="entry name" value="Acyl_carrier"/>
    <property type="match status" value="1"/>
</dbReference>
<dbReference type="InterPro" id="IPR003231">
    <property type="entry name" value="ACP"/>
</dbReference>
<dbReference type="InterPro" id="IPR036736">
    <property type="entry name" value="ACP-like_sf"/>
</dbReference>
<dbReference type="InterPro" id="IPR009081">
    <property type="entry name" value="PP-bd_ACP"/>
</dbReference>
<dbReference type="InterPro" id="IPR006162">
    <property type="entry name" value="Ppantetheine_attach_site"/>
</dbReference>
<dbReference type="NCBIfam" id="TIGR00517">
    <property type="entry name" value="acyl_carrier"/>
    <property type="match status" value="1"/>
</dbReference>
<dbReference type="NCBIfam" id="NF002148">
    <property type="entry name" value="PRK00982.1-2"/>
    <property type="match status" value="1"/>
</dbReference>
<dbReference type="NCBIfam" id="NF002150">
    <property type="entry name" value="PRK00982.1-4"/>
    <property type="match status" value="1"/>
</dbReference>
<dbReference type="PANTHER" id="PTHR20863">
    <property type="entry name" value="ACYL CARRIER PROTEIN"/>
    <property type="match status" value="1"/>
</dbReference>
<dbReference type="PANTHER" id="PTHR20863:SF76">
    <property type="entry name" value="CARRIER DOMAIN-CONTAINING PROTEIN"/>
    <property type="match status" value="1"/>
</dbReference>
<dbReference type="Pfam" id="PF00550">
    <property type="entry name" value="PP-binding"/>
    <property type="match status" value="1"/>
</dbReference>
<dbReference type="SUPFAM" id="SSF47336">
    <property type="entry name" value="ACP-like"/>
    <property type="match status" value="1"/>
</dbReference>
<dbReference type="PROSITE" id="PS50075">
    <property type="entry name" value="CARRIER"/>
    <property type="match status" value="1"/>
</dbReference>
<dbReference type="PROSITE" id="PS00012">
    <property type="entry name" value="PHOSPHOPANTETHEINE"/>
    <property type="match status" value="1"/>
</dbReference>
<organism>
    <name type="scientific">Buchnera aphidicola subsp. Baizongia pistaciae (strain Bp)</name>
    <dbReference type="NCBI Taxonomy" id="224915"/>
    <lineage>
        <taxon>Bacteria</taxon>
        <taxon>Pseudomonadati</taxon>
        <taxon>Pseudomonadota</taxon>
        <taxon>Gammaproteobacteria</taxon>
        <taxon>Enterobacterales</taxon>
        <taxon>Erwiniaceae</taxon>
        <taxon>Buchnera</taxon>
    </lineage>
</organism>
<protein>
    <recommendedName>
        <fullName evidence="1">Acyl carrier protein</fullName>
        <shortName evidence="1">ACP</shortName>
    </recommendedName>
</protein>
<name>ACP_BUCBP</name>
<feature type="chain" id="PRO_0000180119" description="Acyl carrier protein">
    <location>
        <begin position="1"/>
        <end position="78"/>
    </location>
</feature>
<feature type="domain" description="Carrier" evidence="2">
    <location>
        <begin position="2"/>
        <end position="77"/>
    </location>
</feature>
<feature type="modified residue" description="O-(pantetheine 4'-phosphoryl)serine" evidence="2">
    <location>
        <position position="37"/>
    </location>
</feature>
<gene>
    <name evidence="1" type="primary">acpP</name>
    <name type="ordered locus">bbp_322</name>
</gene>
<comment type="function">
    <text evidence="1">Carrier of the growing fatty acid chain in fatty acid biosynthesis.</text>
</comment>
<comment type="pathway">
    <text evidence="1">Lipid metabolism; fatty acid biosynthesis.</text>
</comment>
<comment type="subcellular location">
    <subcellularLocation>
        <location evidence="1">Cytoplasm</location>
    </subcellularLocation>
</comment>
<comment type="PTM">
    <text evidence="1">4'-phosphopantetheine is transferred from CoA to a specific serine of apo-ACP by AcpS. This modification is essential for activity because fatty acids are bound in thioester linkage to the sulfhydryl of the prosthetic group.</text>
</comment>
<comment type="similarity">
    <text evidence="1">Belongs to the acyl carrier protein (ACP) family.</text>
</comment>
<keyword id="KW-0963">Cytoplasm</keyword>
<keyword id="KW-0275">Fatty acid biosynthesis</keyword>
<keyword id="KW-0276">Fatty acid metabolism</keyword>
<keyword id="KW-0444">Lipid biosynthesis</keyword>
<keyword id="KW-0443">Lipid metabolism</keyword>
<keyword id="KW-0596">Phosphopantetheine</keyword>
<keyword id="KW-0597">Phosphoprotein</keyword>
<keyword id="KW-1185">Reference proteome</keyword>
<accession>P59449</accession>
<reference key="1">
    <citation type="journal article" date="2003" name="Proc. Natl. Acad. Sci. U.S.A.">
        <title>Reductive genome evolution in Buchnera aphidicola.</title>
        <authorList>
            <person name="van Ham R.C.H.J."/>
            <person name="Kamerbeek J."/>
            <person name="Palacios C."/>
            <person name="Rausell C."/>
            <person name="Abascal F."/>
            <person name="Bastolla U."/>
            <person name="Fernandez J.M."/>
            <person name="Jimenez L."/>
            <person name="Postigo M."/>
            <person name="Silva F.J."/>
            <person name="Tamames J."/>
            <person name="Viguera E."/>
            <person name="Latorre A."/>
            <person name="Valencia A."/>
            <person name="Moran F."/>
            <person name="Moya A."/>
        </authorList>
    </citation>
    <scope>NUCLEOTIDE SEQUENCE [LARGE SCALE GENOMIC DNA]</scope>
    <source>
        <strain>Bp</strain>
    </source>
</reference>
<proteinExistence type="inferred from homology"/>
<sequence length="78" mass="9031">MQNIEKKIKKIIAQQLGLIEQKITNESLLVEDLNADSLDIVELIMAFEEEFNIEITDEEAENLTSVQSIFDIIKKYVF</sequence>